<reference key="1">
    <citation type="submission" date="2007-07" db="EMBL/GenBank/DDBJ databases">
        <title>Complete genome sequence of Campylobacter hominis ATCC BAA-381, a commensal isolated from the human gastrointestinal tract.</title>
        <authorList>
            <person name="Fouts D.E."/>
            <person name="Mongodin E.F."/>
            <person name="Puiu D."/>
            <person name="Sebastian Y."/>
            <person name="Miller W.G."/>
            <person name="Mandrell R.E."/>
            <person name="Nelson K.E."/>
        </authorList>
    </citation>
    <scope>NUCLEOTIDE SEQUENCE [LARGE SCALE GENOMIC DNA]</scope>
    <source>
        <strain>ATCC BAA-381 / DSM 21671 / CCUG 45161 / LMG 19568 / NCTC 13146 / CH001A</strain>
    </source>
</reference>
<protein>
    <recommendedName>
        <fullName evidence="1">Alanine--tRNA ligase</fullName>
        <ecNumber evidence="1">6.1.1.7</ecNumber>
    </recommendedName>
    <alternativeName>
        <fullName evidence="1">Alanyl-tRNA synthetase</fullName>
        <shortName evidence="1">AlaRS</shortName>
    </alternativeName>
</protein>
<name>SYA_CAMHC</name>
<keyword id="KW-0030">Aminoacyl-tRNA synthetase</keyword>
<keyword id="KW-0067">ATP-binding</keyword>
<keyword id="KW-0963">Cytoplasm</keyword>
<keyword id="KW-0436">Ligase</keyword>
<keyword id="KW-0479">Metal-binding</keyword>
<keyword id="KW-0547">Nucleotide-binding</keyword>
<keyword id="KW-0648">Protein biosynthesis</keyword>
<keyword id="KW-1185">Reference proteome</keyword>
<keyword id="KW-0694">RNA-binding</keyword>
<keyword id="KW-0820">tRNA-binding</keyword>
<keyword id="KW-0862">Zinc</keyword>
<organism>
    <name type="scientific">Campylobacter hominis (strain ATCC BAA-381 / DSM 21671 / CCUG 45161 / LMG 19568 / NCTC 13146 / CH001A)</name>
    <dbReference type="NCBI Taxonomy" id="360107"/>
    <lineage>
        <taxon>Bacteria</taxon>
        <taxon>Pseudomonadati</taxon>
        <taxon>Campylobacterota</taxon>
        <taxon>Epsilonproteobacteria</taxon>
        <taxon>Campylobacterales</taxon>
        <taxon>Campylobacteraceae</taxon>
        <taxon>Campylobacter</taxon>
    </lineage>
</organism>
<evidence type="ECO:0000255" key="1">
    <source>
        <dbReference type="HAMAP-Rule" id="MF_00036"/>
    </source>
</evidence>
<comment type="function">
    <text evidence="1">Catalyzes the attachment of alanine to tRNA(Ala) in a two-step reaction: alanine is first activated by ATP to form Ala-AMP and then transferred to the acceptor end of tRNA(Ala). Also edits incorrectly charged Ser-tRNA(Ala) and Gly-tRNA(Ala) via its editing domain.</text>
</comment>
<comment type="catalytic activity">
    <reaction evidence="1">
        <text>tRNA(Ala) + L-alanine + ATP = L-alanyl-tRNA(Ala) + AMP + diphosphate</text>
        <dbReference type="Rhea" id="RHEA:12540"/>
        <dbReference type="Rhea" id="RHEA-COMP:9657"/>
        <dbReference type="Rhea" id="RHEA-COMP:9923"/>
        <dbReference type="ChEBI" id="CHEBI:30616"/>
        <dbReference type="ChEBI" id="CHEBI:33019"/>
        <dbReference type="ChEBI" id="CHEBI:57972"/>
        <dbReference type="ChEBI" id="CHEBI:78442"/>
        <dbReference type="ChEBI" id="CHEBI:78497"/>
        <dbReference type="ChEBI" id="CHEBI:456215"/>
        <dbReference type="EC" id="6.1.1.7"/>
    </reaction>
</comment>
<comment type="cofactor">
    <cofactor evidence="1">
        <name>Zn(2+)</name>
        <dbReference type="ChEBI" id="CHEBI:29105"/>
    </cofactor>
    <text evidence="1">Binds 1 zinc ion per subunit.</text>
</comment>
<comment type="subcellular location">
    <subcellularLocation>
        <location evidence="1">Cytoplasm</location>
    </subcellularLocation>
</comment>
<comment type="domain">
    <text evidence="1">Consists of three domains; the N-terminal catalytic domain, the editing domain and the C-terminal C-Ala domain. The editing domain removes incorrectly charged amino acids, while the C-Ala domain, along with tRNA(Ala), serves as a bridge to cooperatively bring together the editing and aminoacylation centers thus stimulating deacylation of misacylated tRNAs.</text>
</comment>
<comment type="similarity">
    <text evidence="1">Belongs to the class-II aminoacyl-tRNA synthetase family.</text>
</comment>
<dbReference type="EC" id="6.1.1.7" evidence="1"/>
<dbReference type="EMBL" id="CP000776">
    <property type="protein sequence ID" value="ABS51442.1"/>
    <property type="molecule type" value="Genomic_DNA"/>
</dbReference>
<dbReference type="RefSeq" id="WP_012108842.1">
    <property type="nucleotide sequence ID" value="NC_009714.1"/>
</dbReference>
<dbReference type="SMR" id="A7I206"/>
<dbReference type="STRING" id="360107.CHAB381_0986"/>
<dbReference type="KEGG" id="cha:CHAB381_0986"/>
<dbReference type="eggNOG" id="COG0013">
    <property type="taxonomic scope" value="Bacteria"/>
</dbReference>
<dbReference type="HOGENOM" id="CLU_004485_1_1_7"/>
<dbReference type="OrthoDB" id="9803884at2"/>
<dbReference type="Proteomes" id="UP000002407">
    <property type="component" value="Chromosome"/>
</dbReference>
<dbReference type="GO" id="GO:0005829">
    <property type="term" value="C:cytosol"/>
    <property type="evidence" value="ECO:0007669"/>
    <property type="project" value="TreeGrafter"/>
</dbReference>
<dbReference type="GO" id="GO:0004813">
    <property type="term" value="F:alanine-tRNA ligase activity"/>
    <property type="evidence" value="ECO:0007669"/>
    <property type="project" value="UniProtKB-UniRule"/>
</dbReference>
<dbReference type="GO" id="GO:0002161">
    <property type="term" value="F:aminoacyl-tRNA deacylase activity"/>
    <property type="evidence" value="ECO:0007669"/>
    <property type="project" value="TreeGrafter"/>
</dbReference>
<dbReference type="GO" id="GO:0005524">
    <property type="term" value="F:ATP binding"/>
    <property type="evidence" value="ECO:0007669"/>
    <property type="project" value="UniProtKB-UniRule"/>
</dbReference>
<dbReference type="GO" id="GO:0000049">
    <property type="term" value="F:tRNA binding"/>
    <property type="evidence" value="ECO:0007669"/>
    <property type="project" value="UniProtKB-KW"/>
</dbReference>
<dbReference type="GO" id="GO:0008270">
    <property type="term" value="F:zinc ion binding"/>
    <property type="evidence" value="ECO:0007669"/>
    <property type="project" value="UniProtKB-UniRule"/>
</dbReference>
<dbReference type="GO" id="GO:0006419">
    <property type="term" value="P:alanyl-tRNA aminoacylation"/>
    <property type="evidence" value="ECO:0007669"/>
    <property type="project" value="UniProtKB-UniRule"/>
</dbReference>
<dbReference type="GO" id="GO:0045892">
    <property type="term" value="P:negative regulation of DNA-templated transcription"/>
    <property type="evidence" value="ECO:0007669"/>
    <property type="project" value="TreeGrafter"/>
</dbReference>
<dbReference type="CDD" id="cd00673">
    <property type="entry name" value="AlaRS_core"/>
    <property type="match status" value="1"/>
</dbReference>
<dbReference type="FunFam" id="3.10.310.40:FF:000001">
    <property type="entry name" value="Alanine--tRNA ligase"/>
    <property type="match status" value="1"/>
</dbReference>
<dbReference type="FunFam" id="3.30.930.10:FF:000004">
    <property type="entry name" value="Alanine--tRNA ligase"/>
    <property type="match status" value="1"/>
</dbReference>
<dbReference type="FunFam" id="3.30.980.10:FF:000004">
    <property type="entry name" value="Alanine--tRNA ligase, cytoplasmic"/>
    <property type="match status" value="1"/>
</dbReference>
<dbReference type="Gene3D" id="2.40.30.130">
    <property type="match status" value="1"/>
</dbReference>
<dbReference type="Gene3D" id="3.10.310.40">
    <property type="match status" value="1"/>
</dbReference>
<dbReference type="Gene3D" id="3.30.54.20">
    <property type="match status" value="1"/>
</dbReference>
<dbReference type="Gene3D" id="3.30.930.10">
    <property type="entry name" value="Bira Bifunctional Protein, Domain 2"/>
    <property type="match status" value="1"/>
</dbReference>
<dbReference type="Gene3D" id="3.30.980.10">
    <property type="entry name" value="Threonyl-trna Synthetase, Chain A, domain 2"/>
    <property type="match status" value="1"/>
</dbReference>
<dbReference type="HAMAP" id="MF_00036_B">
    <property type="entry name" value="Ala_tRNA_synth_B"/>
    <property type="match status" value="1"/>
</dbReference>
<dbReference type="InterPro" id="IPR045864">
    <property type="entry name" value="aa-tRNA-synth_II/BPL/LPL"/>
</dbReference>
<dbReference type="InterPro" id="IPR002318">
    <property type="entry name" value="Ala-tRNA-lgiase_IIc"/>
</dbReference>
<dbReference type="InterPro" id="IPR018162">
    <property type="entry name" value="Ala-tRNA-ligase_IIc_anticod-bd"/>
</dbReference>
<dbReference type="InterPro" id="IPR018165">
    <property type="entry name" value="Ala-tRNA-synth_IIc_core"/>
</dbReference>
<dbReference type="InterPro" id="IPR018164">
    <property type="entry name" value="Ala-tRNA-synth_IIc_N"/>
</dbReference>
<dbReference type="InterPro" id="IPR050058">
    <property type="entry name" value="Ala-tRNA_ligase"/>
</dbReference>
<dbReference type="InterPro" id="IPR023033">
    <property type="entry name" value="Ala_tRNA_ligase_euk/bac"/>
</dbReference>
<dbReference type="InterPro" id="IPR003156">
    <property type="entry name" value="DHHA1_dom"/>
</dbReference>
<dbReference type="InterPro" id="IPR018163">
    <property type="entry name" value="Thr/Ala-tRNA-synth_IIc_edit"/>
</dbReference>
<dbReference type="InterPro" id="IPR009000">
    <property type="entry name" value="Transl_B-barrel_sf"/>
</dbReference>
<dbReference type="InterPro" id="IPR012947">
    <property type="entry name" value="tRNA_SAD"/>
</dbReference>
<dbReference type="NCBIfam" id="TIGR00344">
    <property type="entry name" value="alaS"/>
    <property type="match status" value="1"/>
</dbReference>
<dbReference type="PANTHER" id="PTHR11777:SF9">
    <property type="entry name" value="ALANINE--TRNA LIGASE, CYTOPLASMIC"/>
    <property type="match status" value="1"/>
</dbReference>
<dbReference type="PANTHER" id="PTHR11777">
    <property type="entry name" value="ALANYL-TRNA SYNTHETASE"/>
    <property type="match status" value="1"/>
</dbReference>
<dbReference type="Pfam" id="PF02272">
    <property type="entry name" value="DHHA1"/>
    <property type="match status" value="1"/>
</dbReference>
<dbReference type="Pfam" id="PF01411">
    <property type="entry name" value="tRNA-synt_2c"/>
    <property type="match status" value="1"/>
</dbReference>
<dbReference type="Pfam" id="PF07973">
    <property type="entry name" value="tRNA_SAD"/>
    <property type="match status" value="1"/>
</dbReference>
<dbReference type="PRINTS" id="PR00980">
    <property type="entry name" value="TRNASYNTHALA"/>
</dbReference>
<dbReference type="SMART" id="SM00863">
    <property type="entry name" value="tRNA_SAD"/>
    <property type="match status" value="1"/>
</dbReference>
<dbReference type="SUPFAM" id="SSF55681">
    <property type="entry name" value="Class II aaRS and biotin synthetases"/>
    <property type="match status" value="1"/>
</dbReference>
<dbReference type="SUPFAM" id="SSF101353">
    <property type="entry name" value="Putative anticodon-binding domain of alanyl-tRNA synthetase (AlaRS)"/>
    <property type="match status" value="1"/>
</dbReference>
<dbReference type="SUPFAM" id="SSF55186">
    <property type="entry name" value="ThrRS/AlaRS common domain"/>
    <property type="match status" value="1"/>
</dbReference>
<dbReference type="SUPFAM" id="SSF50447">
    <property type="entry name" value="Translation proteins"/>
    <property type="match status" value="1"/>
</dbReference>
<dbReference type="PROSITE" id="PS50860">
    <property type="entry name" value="AA_TRNA_LIGASE_II_ALA"/>
    <property type="match status" value="1"/>
</dbReference>
<proteinExistence type="inferred from homology"/>
<accession>A7I206</accession>
<sequence>MDIRKEFLDFFASKGHEIIASAPLVPDDASLLFTNAGMVPFKNIFTGAVPRPTPPIRTSCQTCIRAGGKHNDLDNVGYTARHHTFFEMLGNFSFGEYFKENAIAYAWEFITEILKLDKDKLYVTVHEKDDEAFEIWAKHIAKERIYRFGDHDNFWAMGDTGPCGPCSEIFYDQGEEYFHGKEDYMGGDGDRFLEIWNLVFMQFERDKAGNLSPLPKPSIDTGMGLERVTAIKEGVFSNYDSSIFMPLIHAVEKLCGKPYKYESGASYRVIADHIRSITFLIAQGVNFDKEGRGYVLRRILRRALRHGYLLGLKEPFMYKLVDNVCELMGHHYSYLLEKKETIKEIIKLEEERFLSTISAGLELFKAQLANTKDVFSGEIAFKLYDTYGFPLDLTADMLREIGKKVDEKKFDELMNEQKARAKASWKGSGDKIKEKGDFKALLEKFGENKFIGYETMKSQSKILAILNNDFRNVDELKAGNIGWIMLDETPFYAQSGGQIYDTGLINGSNKVTDTQKFFGLNLSEVETSTNLKVGDIVKCEVDEARIETARHHSATHLLHLALREILGSGVGQAGSSVDSERLRFDFTYPKSLTSEQLLKIENNVNSQISKGGASKTEIMDINEAIKSGAIAMFSEKYGDKVRVLTLGESKEFCGGTHVRNLWEIGSFYIVKESGVSAGVRRIEAVCSKAAINYAKNFRSEFSEVQNALKSNEALSAIKKLKDEIKSLKNEISKASAAKVIDLDEKNGIKFVVSEFDGDIKTKIDELKNENDKIVAVFFKVEDGRVQIAAGVKNAPLKAGEIVKQIAKILGGGGGGRDDFATAGGKDMTKIDEAVNFARDLIKAKI</sequence>
<gene>
    <name evidence="1" type="primary">alaS</name>
    <name type="ordered locus">CHAB381_0986</name>
</gene>
<feature type="chain" id="PRO_0000347541" description="Alanine--tRNA ligase">
    <location>
        <begin position="1"/>
        <end position="845"/>
    </location>
</feature>
<feature type="binding site" evidence="1">
    <location>
        <position position="552"/>
    </location>
    <ligand>
        <name>Zn(2+)</name>
        <dbReference type="ChEBI" id="CHEBI:29105"/>
    </ligand>
</feature>
<feature type="binding site" evidence="1">
    <location>
        <position position="556"/>
    </location>
    <ligand>
        <name>Zn(2+)</name>
        <dbReference type="ChEBI" id="CHEBI:29105"/>
    </ligand>
</feature>
<feature type="binding site" evidence="1">
    <location>
        <position position="653"/>
    </location>
    <ligand>
        <name>Zn(2+)</name>
        <dbReference type="ChEBI" id="CHEBI:29105"/>
    </ligand>
</feature>
<feature type="binding site" evidence="1">
    <location>
        <position position="657"/>
    </location>
    <ligand>
        <name>Zn(2+)</name>
        <dbReference type="ChEBI" id="CHEBI:29105"/>
    </ligand>
</feature>